<proteinExistence type="inferred from homology"/>
<accession>B8HW52</accession>
<feature type="chain" id="PRO_1000199861" description="Urease subunit gamma">
    <location>
        <begin position="1"/>
        <end position="100"/>
    </location>
</feature>
<keyword id="KW-0963">Cytoplasm</keyword>
<keyword id="KW-0378">Hydrolase</keyword>
<name>URE3_CYAP4</name>
<protein>
    <recommendedName>
        <fullName evidence="1">Urease subunit gamma</fullName>
        <ecNumber evidence="1">3.5.1.5</ecNumber>
    </recommendedName>
    <alternativeName>
        <fullName evidence="1">Urea amidohydrolase subunit gamma</fullName>
    </alternativeName>
</protein>
<organism>
    <name type="scientific">Cyanothece sp. (strain PCC 7425 / ATCC 29141)</name>
    <dbReference type="NCBI Taxonomy" id="395961"/>
    <lineage>
        <taxon>Bacteria</taxon>
        <taxon>Bacillati</taxon>
        <taxon>Cyanobacteriota</taxon>
        <taxon>Cyanophyceae</taxon>
        <taxon>Gomontiellales</taxon>
        <taxon>Cyanothecaceae</taxon>
        <taxon>Cyanothece</taxon>
    </lineage>
</organism>
<sequence>MQLTPQEKDKLLIFTAALLAERRKARGLKLNYPEAIAYISAAILEGARDGRTVSELMNYGTTLLSRNDVMEGIAEMIHEIQVEATFPDGTKLVTVHNPIQ</sequence>
<dbReference type="EC" id="3.5.1.5" evidence="1"/>
<dbReference type="EMBL" id="CP001344">
    <property type="protein sequence ID" value="ACL44631.1"/>
    <property type="molecule type" value="Genomic_DNA"/>
</dbReference>
<dbReference type="SMR" id="B8HW52"/>
<dbReference type="STRING" id="395961.Cyan7425_2271"/>
<dbReference type="KEGG" id="cyn:Cyan7425_2271"/>
<dbReference type="eggNOG" id="COG0831">
    <property type="taxonomic scope" value="Bacteria"/>
</dbReference>
<dbReference type="HOGENOM" id="CLU_145825_1_0_3"/>
<dbReference type="OrthoDB" id="9793527at2"/>
<dbReference type="UniPathway" id="UPA00258">
    <property type="reaction ID" value="UER00370"/>
</dbReference>
<dbReference type="GO" id="GO:0005737">
    <property type="term" value="C:cytoplasm"/>
    <property type="evidence" value="ECO:0007669"/>
    <property type="project" value="UniProtKB-SubCell"/>
</dbReference>
<dbReference type="GO" id="GO:0016151">
    <property type="term" value="F:nickel cation binding"/>
    <property type="evidence" value="ECO:0007669"/>
    <property type="project" value="InterPro"/>
</dbReference>
<dbReference type="GO" id="GO:0009039">
    <property type="term" value="F:urease activity"/>
    <property type="evidence" value="ECO:0007669"/>
    <property type="project" value="UniProtKB-UniRule"/>
</dbReference>
<dbReference type="GO" id="GO:0043419">
    <property type="term" value="P:urea catabolic process"/>
    <property type="evidence" value="ECO:0007669"/>
    <property type="project" value="UniProtKB-UniRule"/>
</dbReference>
<dbReference type="CDD" id="cd00390">
    <property type="entry name" value="Urease_gamma"/>
    <property type="match status" value="1"/>
</dbReference>
<dbReference type="Gene3D" id="3.30.280.10">
    <property type="entry name" value="Urease, gamma-like subunit"/>
    <property type="match status" value="1"/>
</dbReference>
<dbReference type="HAMAP" id="MF_00739">
    <property type="entry name" value="Urease_gamma"/>
    <property type="match status" value="1"/>
</dbReference>
<dbReference type="InterPro" id="IPR012010">
    <property type="entry name" value="Urease_gamma"/>
</dbReference>
<dbReference type="InterPro" id="IPR002026">
    <property type="entry name" value="Urease_gamma/gamma-beta_su"/>
</dbReference>
<dbReference type="InterPro" id="IPR036463">
    <property type="entry name" value="Urease_gamma_sf"/>
</dbReference>
<dbReference type="InterPro" id="IPR050069">
    <property type="entry name" value="Urease_subunit"/>
</dbReference>
<dbReference type="NCBIfam" id="NF009712">
    <property type="entry name" value="PRK13241.1"/>
    <property type="match status" value="1"/>
</dbReference>
<dbReference type="NCBIfam" id="TIGR00193">
    <property type="entry name" value="urease_gam"/>
    <property type="match status" value="1"/>
</dbReference>
<dbReference type="PANTHER" id="PTHR33569">
    <property type="entry name" value="UREASE"/>
    <property type="match status" value="1"/>
</dbReference>
<dbReference type="PANTHER" id="PTHR33569:SF1">
    <property type="entry name" value="UREASE"/>
    <property type="match status" value="1"/>
</dbReference>
<dbReference type="Pfam" id="PF00547">
    <property type="entry name" value="Urease_gamma"/>
    <property type="match status" value="1"/>
</dbReference>
<dbReference type="PIRSF" id="PIRSF001223">
    <property type="entry name" value="Urease_gamma"/>
    <property type="match status" value="1"/>
</dbReference>
<dbReference type="SUPFAM" id="SSF54111">
    <property type="entry name" value="Urease, gamma-subunit"/>
    <property type="match status" value="1"/>
</dbReference>
<comment type="catalytic activity">
    <reaction evidence="1">
        <text>urea + 2 H2O + H(+) = hydrogencarbonate + 2 NH4(+)</text>
        <dbReference type="Rhea" id="RHEA:20557"/>
        <dbReference type="ChEBI" id="CHEBI:15377"/>
        <dbReference type="ChEBI" id="CHEBI:15378"/>
        <dbReference type="ChEBI" id="CHEBI:16199"/>
        <dbReference type="ChEBI" id="CHEBI:17544"/>
        <dbReference type="ChEBI" id="CHEBI:28938"/>
        <dbReference type="EC" id="3.5.1.5"/>
    </reaction>
</comment>
<comment type="pathway">
    <text evidence="1">Nitrogen metabolism; urea degradation; CO(2) and NH(3) from urea (urease route): step 1/1.</text>
</comment>
<comment type="subunit">
    <text evidence="1">Heterotrimer of UreA (gamma), UreB (beta) and UreC (alpha) subunits. Three heterotrimers associate to form the active enzyme.</text>
</comment>
<comment type="subcellular location">
    <subcellularLocation>
        <location evidence="1">Cytoplasm</location>
    </subcellularLocation>
</comment>
<comment type="similarity">
    <text evidence="1">Belongs to the urease gamma subunit family.</text>
</comment>
<evidence type="ECO:0000255" key="1">
    <source>
        <dbReference type="HAMAP-Rule" id="MF_00739"/>
    </source>
</evidence>
<gene>
    <name evidence="1" type="primary">ureA</name>
    <name type="ordered locus">Cyan7425_2271</name>
</gene>
<reference key="1">
    <citation type="journal article" date="2011" name="MBio">
        <title>Novel metabolic attributes of the genus Cyanothece, comprising a group of unicellular nitrogen-fixing Cyanobacteria.</title>
        <authorList>
            <person name="Bandyopadhyay A."/>
            <person name="Elvitigala T."/>
            <person name="Welsh E."/>
            <person name="Stockel J."/>
            <person name="Liberton M."/>
            <person name="Min H."/>
            <person name="Sherman L.A."/>
            <person name="Pakrasi H.B."/>
        </authorList>
    </citation>
    <scope>NUCLEOTIDE SEQUENCE [LARGE SCALE GENOMIC DNA]</scope>
    <source>
        <strain>PCC 7425 / ATCC 29141</strain>
    </source>
</reference>